<comment type="function">
    <text evidence="1">Catalyzes the methyl esterification of L-isoaspartyl residues in peptides and proteins that result from spontaneous decomposition of normal L-aspartyl and L-asparaginyl residues. It plays a role in the repair and/or degradation of damaged proteins.</text>
</comment>
<comment type="catalytic activity">
    <reaction evidence="1">
        <text>[protein]-L-isoaspartate + S-adenosyl-L-methionine = [protein]-L-isoaspartate alpha-methyl ester + S-adenosyl-L-homocysteine</text>
        <dbReference type="Rhea" id="RHEA:12705"/>
        <dbReference type="Rhea" id="RHEA-COMP:12143"/>
        <dbReference type="Rhea" id="RHEA-COMP:12144"/>
        <dbReference type="ChEBI" id="CHEBI:57856"/>
        <dbReference type="ChEBI" id="CHEBI:59789"/>
        <dbReference type="ChEBI" id="CHEBI:90596"/>
        <dbReference type="ChEBI" id="CHEBI:90598"/>
        <dbReference type="EC" id="2.1.1.77"/>
    </reaction>
</comment>
<comment type="subcellular location">
    <subcellularLocation>
        <location evidence="1">Cytoplasm</location>
    </subcellularLocation>
</comment>
<comment type="similarity">
    <text evidence="1">Belongs to the methyltransferase superfamily. L-isoaspartyl/D-aspartyl protein methyltransferase family.</text>
</comment>
<name>PIMT_ECO7I</name>
<organism>
    <name type="scientific">Escherichia coli O7:K1 (strain IAI39 / ExPEC)</name>
    <dbReference type="NCBI Taxonomy" id="585057"/>
    <lineage>
        <taxon>Bacteria</taxon>
        <taxon>Pseudomonadati</taxon>
        <taxon>Pseudomonadota</taxon>
        <taxon>Gammaproteobacteria</taxon>
        <taxon>Enterobacterales</taxon>
        <taxon>Enterobacteriaceae</taxon>
        <taxon>Escherichia</taxon>
    </lineage>
</organism>
<evidence type="ECO:0000255" key="1">
    <source>
        <dbReference type="HAMAP-Rule" id="MF_00090"/>
    </source>
</evidence>
<feature type="chain" id="PRO_1000192394" description="Protein-L-isoaspartate O-methyltransferase">
    <location>
        <begin position="1"/>
        <end position="208"/>
    </location>
</feature>
<feature type="active site" evidence="1">
    <location>
        <position position="59"/>
    </location>
</feature>
<accession>B7NT87</accession>
<keyword id="KW-0963">Cytoplasm</keyword>
<keyword id="KW-0489">Methyltransferase</keyword>
<keyword id="KW-0949">S-adenosyl-L-methionine</keyword>
<keyword id="KW-0808">Transferase</keyword>
<sequence>MVSRRVQALLDQLRVQGIQDEQVLNALAAVPREKFVDEAFEQKAWDNIALPIGQGQTISQPYMVARMTELLELTPQSRVLEIGTGSGYQTAILAHLVQHVCSVERIKGLQWQARRRLKNLDLHNVSTRHGDGWQGWQARAPFDAIIVTAAPPEIPTALMTQLDEGGILVLPVGEEHQYLKRVRRRGGEFIIDTVEAVRFVPLVKGELA</sequence>
<gene>
    <name evidence="1" type="primary">pcm</name>
    <name type="ordered locus">ECIAI39_2932</name>
</gene>
<proteinExistence type="inferred from homology"/>
<dbReference type="EC" id="2.1.1.77" evidence="1"/>
<dbReference type="EMBL" id="CU928164">
    <property type="protein sequence ID" value="CAR19051.1"/>
    <property type="molecule type" value="Genomic_DNA"/>
</dbReference>
<dbReference type="RefSeq" id="WP_000254713.1">
    <property type="nucleotide sequence ID" value="NC_011750.1"/>
</dbReference>
<dbReference type="RefSeq" id="YP_002408863.1">
    <property type="nucleotide sequence ID" value="NC_011750.1"/>
</dbReference>
<dbReference type="SMR" id="B7NT87"/>
<dbReference type="STRING" id="585057.ECIAI39_2932"/>
<dbReference type="KEGG" id="ect:ECIAI39_2932"/>
<dbReference type="PATRIC" id="fig|585057.6.peg.3041"/>
<dbReference type="HOGENOM" id="CLU_055432_2_0_6"/>
<dbReference type="Proteomes" id="UP000000749">
    <property type="component" value="Chromosome"/>
</dbReference>
<dbReference type="GO" id="GO:0005737">
    <property type="term" value="C:cytoplasm"/>
    <property type="evidence" value="ECO:0007669"/>
    <property type="project" value="UniProtKB-SubCell"/>
</dbReference>
<dbReference type="GO" id="GO:0004719">
    <property type="term" value="F:protein-L-isoaspartate (D-aspartate) O-methyltransferase activity"/>
    <property type="evidence" value="ECO:0007669"/>
    <property type="project" value="UniProtKB-UniRule"/>
</dbReference>
<dbReference type="GO" id="GO:0032259">
    <property type="term" value="P:methylation"/>
    <property type="evidence" value="ECO:0007669"/>
    <property type="project" value="UniProtKB-KW"/>
</dbReference>
<dbReference type="GO" id="GO:0036211">
    <property type="term" value="P:protein modification process"/>
    <property type="evidence" value="ECO:0007669"/>
    <property type="project" value="UniProtKB-UniRule"/>
</dbReference>
<dbReference type="GO" id="GO:0030091">
    <property type="term" value="P:protein repair"/>
    <property type="evidence" value="ECO:0007669"/>
    <property type="project" value="UniProtKB-UniRule"/>
</dbReference>
<dbReference type="CDD" id="cd02440">
    <property type="entry name" value="AdoMet_MTases"/>
    <property type="match status" value="1"/>
</dbReference>
<dbReference type="FunFam" id="3.40.50.150:FF:000010">
    <property type="entry name" value="Protein-L-isoaspartate O-methyltransferase"/>
    <property type="match status" value="1"/>
</dbReference>
<dbReference type="Gene3D" id="3.40.50.150">
    <property type="entry name" value="Vaccinia Virus protein VP39"/>
    <property type="match status" value="1"/>
</dbReference>
<dbReference type="HAMAP" id="MF_00090">
    <property type="entry name" value="PIMT"/>
    <property type="match status" value="1"/>
</dbReference>
<dbReference type="InterPro" id="IPR000682">
    <property type="entry name" value="PCMT"/>
</dbReference>
<dbReference type="InterPro" id="IPR029063">
    <property type="entry name" value="SAM-dependent_MTases_sf"/>
</dbReference>
<dbReference type="NCBIfam" id="TIGR00080">
    <property type="entry name" value="pimt"/>
    <property type="match status" value="1"/>
</dbReference>
<dbReference type="NCBIfam" id="NF001453">
    <property type="entry name" value="PRK00312.1"/>
    <property type="match status" value="1"/>
</dbReference>
<dbReference type="PANTHER" id="PTHR11579">
    <property type="entry name" value="PROTEIN-L-ISOASPARTATE O-METHYLTRANSFERASE"/>
    <property type="match status" value="1"/>
</dbReference>
<dbReference type="PANTHER" id="PTHR11579:SF0">
    <property type="entry name" value="PROTEIN-L-ISOASPARTATE(D-ASPARTATE) O-METHYLTRANSFERASE"/>
    <property type="match status" value="1"/>
</dbReference>
<dbReference type="Pfam" id="PF01135">
    <property type="entry name" value="PCMT"/>
    <property type="match status" value="1"/>
</dbReference>
<dbReference type="SUPFAM" id="SSF53335">
    <property type="entry name" value="S-adenosyl-L-methionine-dependent methyltransferases"/>
    <property type="match status" value="1"/>
</dbReference>
<dbReference type="PROSITE" id="PS01279">
    <property type="entry name" value="PCMT"/>
    <property type="match status" value="1"/>
</dbReference>
<reference key="1">
    <citation type="journal article" date="2009" name="PLoS Genet.">
        <title>Organised genome dynamics in the Escherichia coli species results in highly diverse adaptive paths.</title>
        <authorList>
            <person name="Touchon M."/>
            <person name="Hoede C."/>
            <person name="Tenaillon O."/>
            <person name="Barbe V."/>
            <person name="Baeriswyl S."/>
            <person name="Bidet P."/>
            <person name="Bingen E."/>
            <person name="Bonacorsi S."/>
            <person name="Bouchier C."/>
            <person name="Bouvet O."/>
            <person name="Calteau A."/>
            <person name="Chiapello H."/>
            <person name="Clermont O."/>
            <person name="Cruveiller S."/>
            <person name="Danchin A."/>
            <person name="Diard M."/>
            <person name="Dossat C."/>
            <person name="Karoui M.E."/>
            <person name="Frapy E."/>
            <person name="Garry L."/>
            <person name="Ghigo J.M."/>
            <person name="Gilles A.M."/>
            <person name="Johnson J."/>
            <person name="Le Bouguenec C."/>
            <person name="Lescat M."/>
            <person name="Mangenot S."/>
            <person name="Martinez-Jehanne V."/>
            <person name="Matic I."/>
            <person name="Nassif X."/>
            <person name="Oztas S."/>
            <person name="Petit M.A."/>
            <person name="Pichon C."/>
            <person name="Rouy Z."/>
            <person name="Ruf C.S."/>
            <person name="Schneider D."/>
            <person name="Tourret J."/>
            <person name="Vacherie B."/>
            <person name="Vallenet D."/>
            <person name="Medigue C."/>
            <person name="Rocha E.P.C."/>
            <person name="Denamur E."/>
        </authorList>
    </citation>
    <scope>NUCLEOTIDE SEQUENCE [LARGE SCALE GENOMIC DNA]</scope>
    <source>
        <strain>IAI39 / ExPEC</strain>
    </source>
</reference>
<protein>
    <recommendedName>
        <fullName evidence="1">Protein-L-isoaspartate O-methyltransferase</fullName>
        <ecNumber evidence="1">2.1.1.77</ecNumber>
    </recommendedName>
    <alternativeName>
        <fullName evidence="1">L-isoaspartyl protein carboxyl methyltransferase</fullName>
    </alternativeName>
    <alternativeName>
        <fullName evidence="1">Protein L-isoaspartyl methyltransferase</fullName>
    </alternativeName>
    <alternativeName>
        <fullName evidence="1">Protein-beta-aspartate methyltransferase</fullName>
        <shortName evidence="1">PIMT</shortName>
    </alternativeName>
</protein>